<comment type="function">
    <text evidence="1">Transcriptional transactivator.</text>
</comment>
<comment type="subunit">
    <text evidence="1">Interacts with human UBE2I in the nucleus. Although this interaction does not promote IE2 sumoylation, it represses transactivation activity (By similarity).</text>
</comment>
<comment type="subcellular location">
    <subcellularLocation>
        <location evidence="1">Host nucleus</location>
    </subcellularLocation>
</comment>
<comment type="similarity">
    <text evidence="3">Belongs to the herpesviridae IE2 family.</text>
</comment>
<organism>
    <name type="scientific">Human herpesvirus 6B (strain Z29)</name>
    <name type="common">HHV-6 variant B</name>
    <name type="synonym">Human B lymphotropic virus</name>
    <dbReference type="NCBI Taxonomy" id="36351"/>
    <lineage>
        <taxon>Viruses</taxon>
        <taxon>Duplodnaviria</taxon>
        <taxon>Heunggongvirae</taxon>
        <taxon>Peploviricota</taxon>
        <taxon>Herviviricetes</taxon>
        <taxon>Herpesvirales</taxon>
        <taxon>Orthoherpesviridae</taxon>
        <taxon>Betaherpesvirinae</taxon>
        <taxon>Roseolovirus</taxon>
        <taxon>Roseolovirus humanbeta6b</taxon>
        <taxon>Human herpesvirus 6B</taxon>
    </lineage>
</organism>
<evidence type="ECO:0000250" key="1"/>
<evidence type="ECO:0000256" key="2">
    <source>
        <dbReference type="SAM" id="MobiDB-lite"/>
    </source>
</evidence>
<evidence type="ECO:0000305" key="3"/>
<gene>
    <name type="primary">U90/U86</name>
</gene>
<name>IE2_HHV6Z</name>
<sequence length="1520" mass="171363">MKLSGLYHDADVTHRQPLSENTHQDPISSQDSRKNSRTPQDPRRAAQIHRQCTSSASNLPSNGNNSIHMRFASELPDQVLQPMYASQNQTTNSQCNFTSLPYQPNYDAYRSIESSYRESRNTDRGYDSNFRHHSHRPRGGKGRYDSRNYFNPNSKYQQPYGRFFPRSYNRRGRGHRLHDFSNRPADLSYQQYMHPNYEQYNPDLRMNNYKDVTQLTTNFNFQAQDYSMAFSQTSITTDPTYVQSDNHNYPTKTQTTPETTKTKEHENAKDNKEHKKQQVSTSPDAISLSYRPSSQKMDLIKKIYDTEVIPLPKEALIDNGSYCGVDTQKYKKTHIRCRSIQKTKGHSSQTINKHKVQKHNENHVPSRSDLKQRKSNQHEDEAVTEARDFSKLDPLLSPLPMTPEPTLNFAVHKTKIHSDSELHHTKKNIHRSKTSLQDRVLISKHAPRAPTKDNSYKKHHDPKDTNDPKMKHSRGRTTSKKNTANSNGHQDVREVAVKNVSGKAAKNTSKKSDPSHNLHGKTSDEQYKTSPDNEKISTPPKSKTHHCIHDSSSSEEGQYKSPNNSESNYGNCLSDKFYDNFTKTTPNSKTNHKTEESTENTDLNSFSNENTNKTEIEDSNIIQPFSQLFCNETIIPSTSACPTQETPSTMNRNCASKKHSAGANKNLTDNSPIRSHSNPSSFTAFNKSNSGNSTMNSTSNGDECTDKKPNCSSTENKSETSNQTNGENSDKPLSKTFTEVSDRASSRASSRASSRASSRASSRASSRASSRASSRTSSRASSRAFSRASSRVSSRASSRASSRASSRASSRASSRASGRASGRASSRASSRVSSRASSRASSRASSRASSRASSRASSRVSSKASSRASSRASSRASSRASSRASSRASSRASSRASSRASSRASSRASSRASSRASSRASSRASSRASSRASSRASGRASSKASSRASSRASGKTPNNKLMSNIPSPQTYEKTSNKRKPRQIYCDSNKRQIYPHDTSISTEAEVSEIKFRCGPELNFYKNAAARLQSFNHNDQFYNPRFRPHIRTNRKKSESTNYTDSESSTSRSRSHSRYSPDSLNTPKRKKHKSGSSSISSSIEENSRSNSRTETGTDKLITFNYQHSRTRSSSSSSVSSSCSSSRSKSWRKSRYKNSEDPATYSPRSRLQQLEKQTRPKSASRDKTKIKSPNHESKHRHADMFRNSQKTGEKFPLDNSSPSNTHEQSNHLENAIDQEQKKTPKTTNTTTNTIYRPRDNQSNISRNTTKCKKKRTRDDDSDSSMQNFFKKRISGTQKTDSEISEIEEELSYREYVRRKEKKESAKYKIHRGRVSTKDFRKLFRNTIRAFEYKQIPKKPFPENKLKEAVYNICSNGCSNTGAIIMYFTRSKQVAEIIKTMQRELMIRPNITVSEPFKMNHAPPNYYDKDAINQFIELQKQGPQELWDKLENNTHDLFTRHSDVKTLMVYAATPIDFVMASKICNKYAKDKPKEIVLRVCSIIDGDNSISIYNSVSRDFKSKYLTLSKC</sequence>
<reference key="1">
    <citation type="journal article" date="1999" name="J. Virol.">
        <title>Human herpesvirus 6B genome sequence: coding content and comparison with human herpesvirus 6A.</title>
        <authorList>
            <person name="Dominguez G."/>
            <person name="Dambaugh T.R."/>
            <person name="Stamey F.R."/>
            <person name="Dewhurst S."/>
            <person name="Inoue N."/>
            <person name="Pellett P.E."/>
        </authorList>
    </citation>
    <scope>NUCLEOTIDE SEQUENCE [GENOMIC DNA]</scope>
</reference>
<feature type="chain" id="PRO_0000260224" description="Immediate-early protein 2">
    <location>
        <begin position="1"/>
        <end position="1520"/>
    </location>
</feature>
<feature type="region of interest" description="Disordered" evidence="2">
    <location>
        <begin position="1"/>
        <end position="67"/>
    </location>
</feature>
<feature type="region of interest" description="Disordered" evidence="2">
    <location>
        <begin position="115"/>
        <end position="162"/>
    </location>
</feature>
<feature type="region of interest" description="Disordered" evidence="2">
    <location>
        <begin position="239"/>
        <end position="290"/>
    </location>
</feature>
<feature type="region of interest" description="Disordered" evidence="2">
    <location>
        <begin position="340"/>
        <end position="406"/>
    </location>
</feature>
<feature type="region of interest" description="Disordered" evidence="2">
    <location>
        <begin position="418"/>
        <end position="571"/>
    </location>
</feature>
<feature type="region of interest" description="Disordered" evidence="2">
    <location>
        <begin position="583"/>
        <end position="611"/>
    </location>
</feature>
<feature type="region of interest" description="Disordered" evidence="2">
    <location>
        <begin position="640"/>
        <end position="987"/>
    </location>
</feature>
<feature type="region of interest" description="Interaction with human UBE2I" evidence="1">
    <location>
        <begin position="1024"/>
        <end position="1072"/>
    </location>
</feature>
<feature type="region of interest" description="Disordered" evidence="2">
    <location>
        <begin position="1033"/>
        <end position="1278"/>
    </location>
</feature>
<feature type="compositionally biased region" description="Polar residues" evidence="2">
    <location>
        <begin position="16"/>
        <end position="30"/>
    </location>
</feature>
<feature type="compositionally biased region" description="Polar residues" evidence="2">
    <location>
        <begin position="50"/>
        <end position="67"/>
    </location>
</feature>
<feature type="compositionally biased region" description="Basic and acidic residues" evidence="2">
    <location>
        <begin position="115"/>
        <end position="130"/>
    </location>
</feature>
<feature type="compositionally biased region" description="Basic residues" evidence="2">
    <location>
        <begin position="131"/>
        <end position="141"/>
    </location>
</feature>
<feature type="compositionally biased region" description="Polar residues" evidence="2">
    <location>
        <begin position="148"/>
        <end position="157"/>
    </location>
</feature>
<feature type="compositionally biased region" description="Polar residues" evidence="2">
    <location>
        <begin position="239"/>
        <end position="249"/>
    </location>
</feature>
<feature type="compositionally biased region" description="Low complexity" evidence="2">
    <location>
        <begin position="250"/>
        <end position="259"/>
    </location>
</feature>
<feature type="compositionally biased region" description="Basic and acidic residues" evidence="2">
    <location>
        <begin position="260"/>
        <end position="273"/>
    </location>
</feature>
<feature type="compositionally biased region" description="Polar residues" evidence="2">
    <location>
        <begin position="278"/>
        <end position="290"/>
    </location>
</feature>
<feature type="compositionally biased region" description="Basic and acidic residues" evidence="2">
    <location>
        <begin position="358"/>
        <end position="391"/>
    </location>
</feature>
<feature type="compositionally biased region" description="Basic residues" evidence="2">
    <location>
        <begin position="424"/>
        <end position="433"/>
    </location>
</feature>
<feature type="compositionally biased region" description="Basic and acidic residues" evidence="2">
    <location>
        <begin position="450"/>
        <end position="470"/>
    </location>
</feature>
<feature type="compositionally biased region" description="Polar residues" evidence="2">
    <location>
        <begin position="480"/>
        <end position="489"/>
    </location>
</feature>
<feature type="compositionally biased region" description="Basic and acidic residues" evidence="2">
    <location>
        <begin position="510"/>
        <end position="535"/>
    </location>
</feature>
<feature type="compositionally biased region" description="Polar residues" evidence="2">
    <location>
        <begin position="550"/>
        <end position="571"/>
    </location>
</feature>
<feature type="compositionally biased region" description="Polar residues" evidence="2">
    <location>
        <begin position="600"/>
        <end position="611"/>
    </location>
</feature>
<feature type="compositionally biased region" description="Polar residues" evidence="2">
    <location>
        <begin position="640"/>
        <end position="654"/>
    </location>
</feature>
<feature type="compositionally biased region" description="Polar residues" evidence="2">
    <location>
        <begin position="663"/>
        <end position="685"/>
    </location>
</feature>
<feature type="compositionally biased region" description="Low complexity" evidence="2">
    <location>
        <begin position="686"/>
        <end position="701"/>
    </location>
</feature>
<feature type="compositionally biased region" description="Polar residues" evidence="2">
    <location>
        <begin position="710"/>
        <end position="727"/>
    </location>
</feature>
<feature type="compositionally biased region" description="Low complexity" evidence="2">
    <location>
        <begin position="746"/>
        <end position="953"/>
    </location>
</feature>
<feature type="compositionally biased region" description="Polar residues" evidence="2">
    <location>
        <begin position="955"/>
        <end position="973"/>
    </location>
</feature>
<feature type="compositionally biased region" description="Low complexity" evidence="2">
    <location>
        <begin position="1059"/>
        <end position="1076"/>
    </location>
</feature>
<feature type="compositionally biased region" description="Low complexity" evidence="2">
    <location>
        <begin position="1089"/>
        <end position="1105"/>
    </location>
</feature>
<feature type="compositionally biased region" description="Low complexity" evidence="2">
    <location>
        <begin position="1124"/>
        <end position="1140"/>
    </location>
</feature>
<feature type="compositionally biased region" description="Polar residues" evidence="2">
    <location>
        <begin position="1158"/>
        <end position="1167"/>
    </location>
</feature>
<feature type="compositionally biased region" description="Basic and acidic residues" evidence="2">
    <location>
        <begin position="1175"/>
        <end position="1188"/>
    </location>
</feature>
<feature type="compositionally biased region" description="Polar residues" evidence="2">
    <location>
        <begin position="1210"/>
        <end position="1219"/>
    </location>
</feature>
<proteinExistence type="inferred from homology"/>
<protein>
    <recommendedName>
        <fullName>Immediate-early protein 2</fullName>
        <shortName>IE2</shortName>
    </recommendedName>
</protein>
<accession>Q9QJ16</accession>
<organismHost>
    <name type="scientific">Homo sapiens</name>
    <name type="common">Human</name>
    <dbReference type="NCBI Taxonomy" id="9606"/>
</organismHost>
<dbReference type="EMBL" id="AF157706">
    <property type="protein sequence ID" value="AAD49674.1"/>
    <property type="molecule type" value="Genomic_DNA"/>
</dbReference>
<dbReference type="SMR" id="Q9QJ16"/>
<dbReference type="KEGG" id="vg:1497086"/>
<dbReference type="Proteomes" id="UP000006930">
    <property type="component" value="Segment"/>
</dbReference>
<dbReference type="GO" id="GO:0042025">
    <property type="term" value="C:host cell nucleus"/>
    <property type="evidence" value="ECO:0007669"/>
    <property type="project" value="UniProtKB-SubCell"/>
</dbReference>
<dbReference type="GO" id="GO:0003677">
    <property type="term" value="F:DNA binding"/>
    <property type="evidence" value="ECO:0007669"/>
    <property type="project" value="UniProtKB-KW"/>
</dbReference>
<dbReference type="GO" id="GO:0006355">
    <property type="term" value="P:regulation of DNA-templated transcription"/>
    <property type="evidence" value="ECO:0007669"/>
    <property type="project" value="InterPro"/>
</dbReference>
<dbReference type="InterPro" id="IPR005028">
    <property type="entry name" value="Herpes_IE2_3"/>
</dbReference>
<dbReference type="Pfam" id="PF03361">
    <property type="entry name" value="Herpes_IE2_3"/>
    <property type="match status" value="1"/>
</dbReference>
<keyword id="KW-0010">Activator</keyword>
<keyword id="KW-0238">DNA-binding</keyword>
<keyword id="KW-1048">Host nucleus</keyword>
<keyword id="KW-0945">Host-virus interaction</keyword>
<keyword id="KW-1185">Reference proteome</keyword>
<keyword id="KW-0677">Repeat</keyword>
<keyword id="KW-0804">Transcription</keyword>
<keyword id="KW-0805">Transcription regulation</keyword>